<sequence>MQDLSLEARLAELESRLAFQESTIEELNVTVTAHEMEMAKLRDHLRLLTEKLKASQPSNIASQAEETPPPHY</sequence>
<comment type="similarity">
    <text evidence="1">Belongs to the SlyX family.</text>
</comment>
<reference key="1">
    <citation type="journal article" date="2005" name="Nucleic Acids Res.">
        <title>Genome dynamics and diversity of Shigella species, the etiologic agents of bacillary dysentery.</title>
        <authorList>
            <person name="Yang F."/>
            <person name="Yang J."/>
            <person name="Zhang X."/>
            <person name="Chen L."/>
            <person name="Jiang Y."/>
            <person name="Yan Y."/>
            <person name="Tang X."/>
            <person name="Wang J."/>
            <person name="Xiong Z."/>
            <person name="Dong J."/>
            <person name="Xue Y."/>
            <person name="Zhu Y."/>
            <person name="Xu X."/>
            <person name="Sun L."/>
            <person name="Chen S."/>
            <person name="Nie H."/>
            <person name="Peng J."/>
            <person name="Xu J."/>
            <person name="Wang Y."/>
            <person name="Yuan Z."/>
            <person name="Wen Y."/>
            <person name="Yao Z."/>
            <person name="Shen Y."/>
            <person name="Qiang B."/>
            <person name="Hou Y."/>
            <person name="Yu J."/>
            <person name="Jin Q."/>
        </authorList>
    </citation>
    <scope>NUCLEOTIDE SEQUENCE [LARGE SCALE GENOMIC DNA]</scope>
    <source>
        <strain>Sb227</strain>
    </source>
</reference>
<feature type="chain" id="PRO_0000227082" description="Protein SlyX">
    <location>
        <begin position="1"/>
        <end position="72"/>
    </location>
</feature>
<feature type="region of interest" description="Disordered" evidence="2">
    <location>
        <begin position="52"/>
        <end position="72"/>
    </location>
</feature>
<feature type="compositionally biased region" description="Polar residues" evidence="2">
    <location>
        <begin position="55"/>
        <end position="65"/>
    </location>
</feature>
<proteinExistence type="inferred from homology"/>
<name>SLYX_SHIBS</name>
<dbReference type="EMBL" id="CP000036">
    <property type="protein sequence ID" value="ABB67816.1"/>
    <property type="molecule type" value="Genomic_DNA"/>
</dbReference>
<dbReference type="RefSeq" id="WP_001153616.1">
    <property type="nucleotide sequence ID" value="NC_007613.1"/>
</dbReference>
<dbReference type="SMR" id="Q31VU2"/>
<dbReference type="KEGG" id="sbo:SBO_3328"/>
<dbReference type="HOGENOM" id="CLU_180796_4_2_6"/>
<dbReference type="Proteomes" id="UP000007067">
    <property type="component" value="Chromosome"/>
</dbReference>
<dbReference type="Gene3D" id="1.20.5.300">
    <property type="match status" value="1"/>
</dbReference>
<dbReference type="HAMAP" id="MF_00715">
    <property type="entry name" value="SlyX"/>
    <property type="match status" value="1"/>
</dbReference>
<dbReference type="InterPro" id="IPR007236">
    <property type="entry name" value="SlyX"/>
</dbReference>
<dbReference type="NCBIfam" id="NF002750">
    <property type="entry name" value="PRK02793.1"/>
    <property type="match status" value="1"/>
</dbReference>
<dbReference type="PANTHER" id="PTHR36508">
    <property type="entry name" value="PROTEIN SLYX"/>
    <property type="match status" value="1"/>
</dbReference>
<dbReference type="PANTHER" id="PTHR36508:SF1">
    <property type="entry name" value="PROTEIN SLYX"/>
    <property type="match status" value="1"/>
</dbReference>
<dbReference type="Pfam" id="PF04102">
    <property type="entry name" value="SlyX"/>
    <property type="match status" value="1"/>
</dbReference>
<gene>
    <name evidence="1" type="primary">slyX</name>
    <name type="ordered locus">SBO_3328</name>
</gene>
<evidence type="ECO:0000255" key="1">
    <source>
        <dbReference type="HAMAP-Rule" id="MF_00715"/>
    </source>
</evidence>
<evidence type="ECO:0000256" key="2">
    <source>
        <dbReference type="SAM" id="MobiDB-lite"/>
    </source>
</evidence>
<organism>
    <name type="scientific">Shigella boydii serotype 4 (strain Sb227)</name>
    <dbReference type="NCBI Taxonomy" id="300268"/>
    <lineage>
        <taxon>Bacteria</taxon>
        <taxon>Pseudomonadati</taxon>
        <taxon>Pseudomonadota</taxon>
        <taxon>Gammaproteobacteria</taxon>
        <taxon>Enterobacterales</taxon>
        <taxon>Enterobacteriaceae</taxon>
        <taxon>Shigella</taxon>
    </lineage>
</organism>
<protein>
    <recommendedName>
        <fullName evidence="1">Protein SlyX</fullName>
    </recommendedName>
</protein>
<accession>Q31VU2</accession>